<organism>
    <name type="scientific">Burkholderia multivorans (strain ATCC 17616 / 249)</name>
    <dbReference type="NCBI Taxonomy" id="395019"/>
    <lineage>
        <taxon>Bacteria</taxon>
        <taxon>Pseudomonadati</taxon>
        <taxon>Pseudomonadota</taxon>
        <taxon>Betaproteobacteria</taxon>
        <taxon>Burkholderiales</taxon>
        <taxon>Burkholderiaceae</taxon>
        <taxon>Burkholderia</taxon>
        <taxon>Burkholderia cepacia complex</taxon>
    </lineage>
</organism>
<keyword id="KW-0456">Lyase</keyword>
<keyword id="KW-1185">Reference proteome</keyword>
<protein>
    <recommendedName>
        <fullName evidence="1">Putative hydro-lyase Bmul_5125/BMULJ_03391</fullName>
        <ecNumber evidence="1">4.2.1.-</ecNumber>
    </recommendedName>
</protein>
<sequence>MNPITPSEFRQSVRRGAFRGPTAGHCGPFAQANLAILPDAYAHDFLRFCQANPKACPLLGVGEPGAFRLDVLGDDLDIRTDVPSYNVYRDGRLTERVDSLEALWRDDFVAFAIGCSFSFEDMLAREGIALRHVEEGRNVPMYRTSIPNRRAGVFGGQLVVSMRPMRGADAIRAVQITSRFPGVHGAPIHLGDPRELGIADLGAPDFGDAVTIREGELPVFWACGVTPQTALMEAKLPLAIAHTPGHMLMTDITNASLAVF</sequence>
<gene>
    <name type="ordered locus">Bmul_5125</name>
    <name type="ordered locus">BMULJ_03391</name>
</gene>
<name>Y3391_BURM1</name>
<reference key="1">
    <citation type="submission" date="2007-10" db="EMBL/GenBank/DDBJ databases">
        <title>Complete sequence of chromosome 2 of Burkholderia multivorans ATCC 17616.</title>
        <authorList>
            <person name="Copeland A."/>
            <person name="Lucas S."/>
            <person name="Lapidus A."/>
            <person name="Barry K."/>
            <person name="Glavina del Rio T."/>
            <person name="Dalin E."/>
            <person name="Tice H."/>
            <person name="Pitluck S."/>
            <person name="Chain P."/>
            <person name="Malfatti S."/>
            <person name="Shin M."/>
            <person name="Vergez L."/>
            <person name="Schmutz J."/>
            <person name="Larimer F."/>
            <person name="Land M."/>
            <person name="Hauser L."/>
            <person name="Kyrpides N."/>
            <person name="Kim E."/>
            <person name="Tiedje J."/>
            <person name="Richardson P."/>
        </authorList>
    </citation>
    <scope>NUCLEOTIDE SEQUENCE [LARGE SCALE GENOMIC DNA]</scope>
    <source>
        <strain>ATCC 17616 / 249</strain>
    </source>
</reference>
<reference key="2">
    <citation type="submission" date="2007-04" db="EMBL/GenBank/DDBJ databases">
        <title>Complete genome sequence of Burkholderia multivorans ATCC 17616.</title>
        <authorList>
            <person name="Ohtsubo Y."/>
            <person name="Yamashita A."/>
            <person name="Kurokawa K."/>
            <person name="Takami H."/>
            <person name="Yuhara S."/>
            <person name="Nishiyama E."/>
            <person name="Endo R."/>
            <person name="Miyazaki R."/>
            <person name="Ono A."/>
            <person name="Yano K."/>
            <person name="Ito M."/>
            <person name="Sota M."/>
            <person name="Yuji N."/>
            <person name="Hattori M."/>
            <person name="Tsuda M."/>
        </authorList>
    </citation>
    <scope>NUCLEOTIDE SEQUENCE [LARGE SCALE GENOMIC DNA]</scope>
    <source>
        <strain>ATCC 17616 / 249</strain>
    </source>
</reference>
<feature type="chain" id="PRO_0000379827" description="Putative hydro-lyase Bmul_5125/BMULJ_03391">
    <location>
        <begin position="1"/>
        <end position="260"/>
    </location>
</feature>
<proteinExistence type="inferred from homology"/>
<evidence type="ECO:0000255" key="1">
    <source>
        <dbReference type="HAMAP-Rule" id="MF_01830"/>
    </source>
</evidence>
<accession>A9AQ22</accession>
<dbReference type="EC" id="4.2.1.-" evidence="1"/>
<dbReference type="EMBL" id="CP000869">
    <property type="protein sequence ID" value="ABX18795.1"/>
    <property type="molecule type" value="Genomic_DNA"/>
</dbReference>
<dbReference type="EMBL" id="AP009386">
    <property type="protein sequence ID" value="BAG45264.1"/>
    <property type="molecule type" value="Genomic_DNA"/>
</dbReference>
<dbReference type="SMR" id="A9AQ22"/>
<dbReference type="STRING" id="395019.BMULJ_03391"/>
<dbReference type="KEGG" id="bmj:BMULJ_03391"/>
<dbReference type="KEGG" id="bmu:Bmul_5125"/>
<dbReference type="eggNOG" id="COG4336">
    <property type="taxonomic scope" value="Bacteria"/>
</dbReference>
<dbReference type="HOGENOM" id="CLU_059759_0_0_4"/>
<dbReference type="Proteomes" id="UP000008815">
    <property type="component" value="Chromosome 2"/>
</dbReference>
<dbReference type="GO" id="GO:0016829">
    <property type="term" value="F:lyase activity"/>
    <property type="evidence" value="ECO:0007669"/>
    <property type="project" value="UniProtKB-KW"/>
</dbReference>
<dbReference type="FunFam" id="3.30.2040.10:FF:000001">
    <property type="entry name" value="D-glutamate cyclase, mitochondrial"/>
    <property type="match status" value="1"/>
</dbReference>
<dbReference type="Gene3D" id="3.40.1640.10">
    <property type="entry name" value="PSTPO5379-like"/>
    <property type="match status" value="1"/>
</dbReference>
<dbReference type="Gene3D" id="3.30.2040.10">
    <property type="entry name" value="PSTPO5379-like domain"/>
    <property type="match status" value="1"/>
</dbReference>
<dbReference type="HAMAP" id="MF_01830">
    <property type="entry name" value="Hydro_lyase"/>
    <property type="match status" value="1"/>
</dbReference>
<dbReference type="InterPro" id="IPR009906">
    <property type="entry name" value="D-Glu_cyclase"/>
</dbReference>
<dbReference type="InterPro" id="IPR038021">
    <property type="entry name" value="Putative_hydro-lyase"/>
</dbReference>
<dbReference type="InterPro" id="IPR016938">
    <property type="entry name" value="UPF0317"/>
</dbReference>
<dbReference type="NCBIfam" id="NF003969">
    <property type="entry name" value="PRK05463.1"/>
    <property type="match status" value="1"/>
</dbReference>
<dbReference type="PANTHER" id="PTHR32022">
    <property type="entry name" value="D-GLUTAMATE CYCLASE, MITOCHONDRIAL"/>
    <property type="match status" value="1"/>
</dbReference>
<dbReference type="PANTHER" id="PTHR32022:SF10">
    <property type="entry name" value="D-GLUTAMATE CYCLASE, MITOCHONDRIAL"/>
    <property type="match status" value="1"/>
</dbReference>
<dbReference type="Pfam" id="PF07286">
    <property type="entry name" value="D-Glu_cyclase"/>
    <property type="match status" value="1"/>
</dbReference>
<dbReference type="PIRSF" id="PIRSF029755">
    <property type="entry name" value="UCP029755"/>
    <property type="match status" value="1"/>
</dbReference>
<dbReference type="SUPFAM" id="SSF160920">
    <property type="entry name" value="PSTPO5379-like"/>
    <property type="match status" value="1"/>
</dbReference>
<comment type="similarity">
    <text evidence="1">Belongs to the D-glutamate cyclase family.</text>
</comment>